<protein>
    <recommendedName>
        <fullName evidence="1">Bifunctional purine biosynthesis protein PurH</fullName>
    </recommendedName>
    <domain>
        <recommendedName>
            <fullName evidence="1">Phosphoribosylaminoimidazolecarboxamide formyltransferase</fullName>
            <ecNumber evidence="1">2.1.2.3</ecNumber>
        </recommendedName>
        <alternativeName>
            <fullName evidence="1">AICAR transformylase</fullName>
        </alternativeName>
    </domain>
    <domain>
        <recommendedName>
            <fullName evidence="1">IMP cyclohydrolase</fullName>
            <ecNumber evidence="1">3.5.4.10</ecNumber>
        </recommendedName>
        <alternativeName>
            <fullName evidence="1">ATIC</fullName>
        </alternativeName>
        <alternativeName>
            <fullName evidence="1">IMP synthase</fullName>
        </alternativeName>
        <alternativeName>
            <fullName evidence="1">Inosinicase</fullName>
        </alternativeName>
    </domain>
</protein>
<proteinExistence type="inferred from homology"/>
<organism>
    <name type="scientific">Bifidobacterium longum (strain NCC 2705)</name>
    <dbReference type="NCBI Taxonomy" id="206672"/>
    <lineage>
        <taxon>Bacteria</taxon>
        <taxon>Bacillati</taxon>
        <taxon>Actinomycetota</taxon>
        <taxon>Actinomycetes</taxon>
        <taxon>Bifidobacteriales</taxon>
        <taxon>Bifidobacteriaceae</taxon>
        <taxon>Bifidobacterium</taxon>
    </lineage>
</organism>
<evidence type="ECO:0000255" key="1">
    <source>
        <dbReference type="HAMAP-Rule" id="MF_00139"/>
    </source>
</evidence>
<evidence type="ECO:0000255" key="2">
    <source>
        <dbReference type="PROSITE-ProRule" id="PRU01202"/>
    </source>
</evidence>
<sequence length="545" mass="58413">MTNTNRPIRRALVSVFHKEGIEVLAEAFVKAGTEVVSTGSTAKKLAELGVKVTEVSDVTGFPECLDGRVKTLHPYIHAGILADMTNPEHAKQLEEFGIKPFDLVVVNLYPFADTVRSGANEADTIEKIDIGGPSMVRGAAKNHATVAIVTDPADYALVASRVADGTGFSLDERKWLAAKAFAHTAAYDATINEWTAKHWPKPASLDAVEVDKDDQGTEVDPAKFPAQFTRTWDRAHTLRYGENSHQQAALYIDPLNQTGFAHAEQLGGKPMSYNNYVDADAAWRTVWDMAPAIAVAVVKHNNPCGLAIGATAAEAHKKAHACDPMSAYGGVIACNSKVTLEMAESVRPIFTEVIVAPDYEPAALELLQTKKKNLRILEVAEPPKGHEAIRQIDGGLLVQDTDLINAVGDDPDAWKLVAGEAADADTLKDLVFAWRAIRCVKSNAILLAHDQATVGIGMGQVNRVDSCHLAVERANTLADGADRATGAVAASDAFFPFADGAQVLIDAGVKAIVQPGGSIRDEEVIEAAKKAGVTMYLTGTRHFFH</sequence>
<accession>Q8G6B1</accession>
<feature type="chain" id="PRO_0000192072" description="Bifunctional purine biosynthesis protein PurH">
    <location>
        <begin position="1"/>
        <end position="545"/>
    </location>
</feature>
<feature type="domain" description="MGS-like" evidence="2">
    <location>
        <begin position="1"/>
        <end position="150"/>
    </location>
</feature>
<name>PUR9_BIFLO</name>
<comment type="catalytic activity">
    <reaction evidence="1">
        <text>(6R)-10-formyltetrahydrofolate + 5-amino-1-(5-phospho-beta-D-ribosyl)imidazole-4-carboxamide = 5-formamido-1-(5-phospho-D-ribosyl)imidazole-4-carboxamide + (6S)-5,6,7,8-tetrahydrofolate</text>
        <dbReference type="Rhea" id="RHEA:22192"/>
        <dbReference type="ChEBI" id="CHEBI:57453"/>
        <dbReference type="ChEBI" id="CHEBI:58467"/>
        <dbReference type="ChEBI" id="CHEBI:58475"/>
        <dbReference type="ChEBI" id="CHEBI:195366"/>
        <dbReference type="EC" id="2.1.2.3"/>
    </reaction>
</comment>
<comment type="catalytic activity">
    <reaction evidence="1">
        <text>IMP + H2O = 5-formamido-1-(5-phospho-D-ribosyl)imidazole-4-carboxamide</text>
        <dbReference type="Rhea" id="RHEA:18445"/>
        <dbReference type="ChEBI" id="CHEBI:15377"/>
        <dbReference type="ChEBI" id="CHEBI:58053"/>
        <dbReference type="ChEBI" id="CHEBI:58467"/>
        <dbReference type="EC" id="3.5.4.10"/>
    </reaction>
</comment>
<comment type="pathway">
    <text evidence="1">Purine metabolism; IMP biosynthesis via de novo pathway; 5-formamido-1-(5-phospho-D-ribosyl)imidazole-4-carboxamide from 5-amino-1-(5-phospho-D-ribosyl)imidazole-4-carboxamide (10-formyl THF route): step 1/1.</text>
</comment>
<comment type="pathway">
    <text evidence="1">Purine metabolism; IMP biosynthesis via de novo pathway; IMP from 5-formamido-1-(5-phospho-D-ribosyl)imidazole-4-carboxamide: step 1/1.</text>
</comment>
<comment type="domain">
    <text evidence="1">The IMP cyclohydrolase activity resides in the N-terminal region.</text>
</comment>
<comment type="similarity">
    <text evidence="1">Belongs to the PurH family.</text>
</comment>
<gene>
    <name evidence="1" type="primary">purH</name>
    <name type="ordered locus">BL0735</name>
</gene>
<reference key="1">
    <citation type="journal article" date="2002" name="Proc. Natl. Acad. Sci. U.S.A.">
        <title>The genome sequence of Bifidobacterium longum reflects its adaptation to the human gastrointestinal tract.</title>
        <authorList>
            <person name="Schell M.A."/>
            <person name="Karmirantzou M."/>
            <person name="Snel B."/>
            <person name="Vilanova D."/>
            <person name="Berger B."/>
            <person name="Pessi G."/>
            <person name="Zwahlen M.-C."/>
            <person name="Desiere F."/>
            <person name="Bork P."/>
            <person name="Delley M."/>
            <person name="Pridmore R.D."/>
            <person name="Arigoni F."/>
        </authorList>
    </citation>
    <scope>NUCLEOTIDE SEQUENCE [LARGE SCALE GENOMIC DNA]</scope>
    <source>
        <strain>NCC 2705</strain>
    </source>
</reference>
<keyword id="KW-0378">Hydrolase</keyword>
<keyword id="KW-0511">Multifunctional enzyme</keyword>
<keyword id="KW-0658">Purine biosynthesis</keyword>
<keyword id="KW-1185">Reference proteome</keyword>
<keyword id="KW-0808">Transferase</keyword>
<dbReference type="EC" id="2.1.2.3" evidence="1"/>
<dbReference type="EC" id="3.5.4.10" evidence="1"/>
<dbReference type="EMBL" id="AE014295">
    <property type="protein sequence ID" value="AAN24552.1"/>
    <property type="molecule type" value="Genomic_DNA"/>
</dbReference>
<dbReference type="RefSeq" id="NP_695916.1">
    <property type="nucleotide sequence ID" value="NC_004307.2"/>
</dbReference>
<dbReference type="RefSeq" id="WP_007052864.1">
    <property type="nucleotide sequence ID" value="NC_004307.2"/>
</dbReference>
<dbReference type="SMR" id="Q8G6B1"/>
<dbReference type="STRING" id="206672.BL0735"/>
<dbReference type="EnsemblBacteria" id="AAN24552">
    <property type="protein sequence ID" value="AAN24552"/>
    <property type="gene ID" value="BL0735"/>
</dbReference>
<dbReference type="KEGG" id="blo:BL0735"/>
<dbReference type="PATRIC" id="fig|206672.9.peg.432"/>
<dbReference type="HOGENOM" id="CLU_016316_5_2_11"/>
<dbReference type="OrthoDB" id="9802065at2"/>
<dbReference type="PhylomeDB" id="Q8G6B1"/>
<dbReference type="UniPathway" id="UPA00074">
    <property type="reaction ID" value="UER00133"/>
</dbReference>
<dbReference type="UniPathway" id="UPA00074">
    <property type="reaction ID" value="UER00135"/>
</dbReference>
<dbReference type="Proteomes" id="UP000000439">
    <property type="component" value="Chromosome"/>
</dbReference>
<dbReference type="GO" id="GO:0005829">
    <property type="term" value="C:cytosol"/>
    <property type="evidence" value="ECO:0007669"/>
    <property type="project" value="TreeGrafter"/>
</dbReference>
<dbReference type="GO" id="GO:0003937">
    <property type="term" value="F:IMP cyclohydrolase activity"/>
    <property type="evidence" value="ECO:0007669"/>
    <property type="project" value="UniProtKB-UniRule"/>
</dbReference>
<dbReference type="GO" id="GO:0004643">
    <property type="term" value="F:phosphoribosylaminoimidazolecarboxamide formyltransferase activity"/>
    <property type="evidence" value="ECO:0007669"/>
    <property type="project" value="UniProtKB-UniRule"/>
</dbReference>
<dbReference type="GO" id="GO:0006189">
    <property type="term" value="P:'de novo' IMP biosynthetic process"/>
    <property type="evidence" value="ECO:0007669"/>
    <property type="project" value="UniProtKB-UniRule"/>
</dbReference>
<dbReference type="CDD" id="cd01421">
    <property type="entry name" value="IMPCH"/>
    <property type="match status" value="1"/>
</dbReference>
<dbReference type="FunFam" id="3.40.140.20:FF:000001">
    <property type="entry name" value="Bifunctional purine biosynthesis protein PurH"/>
    <property type="match status" value="1"/>
</dbReference>
<dbReference type="FunFam" id="3.40.50.1380:FF:000001">
    <property type="entry name" value="Bifunctional purine biosynthesis protein PurH"/>
    <property type="match status" value="1"/>
</dbReference>
<dbReference type="Gene3D" id="3.40.140.20">
    <property type="match status" value="2"/>
</dbReference>
<dbReference type="Gene3D" id="3.40.50.1380">
    <property type="entry name" value="Methylglyoxal synthase-like domain"/>
    <property type="match status" value="1"/>
</dbReference>
<dbReference type="HAMAP" id="MF_00139">
    <property type="entry name" value="PurH"/>
    <property type="match status" value="1"/>
</dbReference>
<dbReference type="InterPro" id="IPR024051">
    <property type="entry name" value="AICAR_Tfase_dup_dom_sf"/>
</dbReference>
<dbReference type="InterPro" id="IPR016193">
    <property type="entry name" value="Cytidine_deaminase-like"/>
</dbReference>
<dbReference type="InterPro" id="IPR011607">
    <property type="entry name" value="MGS-like_dom"/>
</dbReference>
<dbReference type="InterPro" id="IPR036914">
    <property type="entry name" value="MGS-like_dom_sf"/>
</dbReference>
<dbReference type="InterPro" id="IPR002695">
    <property type="entry name" value="PurH-like"/>
</dbReference>
<dbReference type="NCBIfam" id="NF002049">
    <property type="entry name" value="PRK00881.1"/>
    <property type="match status" value="1"/>
</dbReference>
<dbReference type="NCBIfam" id="TIGR00355">
    <property type="entry name" value="purH"/>
    <property type="match status" value="1"/>
</dbReference>
<dbReference type="PANTHER" id="PTHR11692:SF0">
    <property type="entry name" value="BIFUNCTIONAL PURINE BIOSYNTHESIS PROTEIN ATIC"/>
    <property type="match status" value="1"/>
</dbReference>
<dbReference type="PANTHER" id="PTHR11692">
    <property type="entry name" value="BIFUNCTIONAL PURINE BIOSYNTHESIS PROTEIN PURH"/>
    <property type="match status" value="1"/>
</dbReference>
<dbReference type="Pfam" id="PF01808">
    <property type="entry name" value="AICARFT_IMPCHas"/>
    <property type="match status" value="1"/>
</dbReference>
<dbReference type="Pfam" id="PF02142">
    <property type="entry name" value="MGS"/>
    <property type="match status" value="1"/>
</dbReference>
<dbReference type="PIRSF" id="PIRSF000414">
    <property type="entry name" value="AICARFT_IMPCHas"/>
    <property type="match status" value="1"/>
</dbReference>
<dbReference type="SMART" id="SM00798">
    <property type="entry name" value="AICARFT_IMPCHas"/>
    <property type="match status" value="1"/>
</dbReference>
<dbReference type="SMART" id="SM00851">
    <property type="entry name" value="MGS"/>
    <property type="match status" value="1"/>
</dbReference>
<dbReference type="SUPFAM" id="SSF53927">
    <property type="entry name" value="Cytidine deaminase-like"/>
    <property type="match status" value="1"/>
</dbReference>
<dbReference type="SUPFAM" id="SSF52335">
    <property type="entry name" value="Methylglyoxal synthase-like"/>
    <property type="match status" value="1"/>
</dbReference>
<dbReference type="PROSITE" id="PS51855">
    <property type="entry name" value="MGS"/>
    <property type="match status" value="1"/>
</dbReference>